<gene>
    <name evidence="1" type="primary">lysS</name>
    <name type="ordered locus">RHECIAT_CH0003928</name>
</gene>
<dbReference type="EC" id="6.1.1.6" evidence="1"/>
<dbReference type="EMBL" id="CP001074">
    <property type="protein sequence ID" value="ACE92865.1"/>
    <property type="molecule type" value="Genomic_DNA"/>
</dbReference>
<dbReference type="SMR" id="B3Q0S4"/>
<dbReference type="KEGG" id="rec:RHECIAT_CH0003928"/>
<dbReference type="eggNOG" id="COG1190">
    <property type="taxonomic scope" value="Bacteria"/>
</dbReference>
<dbReference type="HOGENOM" id="CLU_008255_6_0_5"/>
<dbReference type="Proteomes" id="UP000008817">
    <property type="component" value="Chromosome"/>
</dbReference>
<dbReference type="GO" id="GO:0005829">
    <property type="term" value="C:cytosol"/>
    <property type="evidence" value="ECO:0007669"/>
    <property type="project" value="TreeGrafter"/>
</dbReference>
<dbReference type="GO" id="GO:0005524">
    <property type="term" value="F:ATP binding"/>
    <property type="evidence" value="ECO:0007669"/>
    <property type="project" value="UniProtKB-UniRule"/>
</dbReference>
<dbReference type="GO" id="GO:0004824">
    <property type="term" value="F:lysine-tRNA ligase activity"/>
    <property type="evidence" value="ECO:0007669"/>
    <property type="project" value="UniProtKB-UniRule"/>
</dbReference>
<dbReference type="GO" id="GO:0000287">
    <property type="term" value="F:magnesium ion binding"/>
    <property type="evidence" value="ECO:0007669"/>
    <property type="project" value="UniProtKB-UniRule"/>
</dbReference>
<dbReference type="GO" id="GO:0000049">
    <property type="term" value="F:tRNA binding"/>
    <property type="evidence" value="ECO:0007669"/>
    <property type="project" value="TreeGrafter"/>
</dbReference>
<dbReference type="GO" id="GO:0006430">
    <property type="term" value="P:lysyl-tRNA aminoacylation"/>
    <property type="evidence" value="ECO:0007669"/>
    <property type="project" value="UniProtKB-UniRule"/>
</dbReference>
<dbReference type="CDD" id="cd00775">
    <property type="entry name" value="LysRS_core"/>
    <property type="match status" value="1"/>
</dbReference>
<dbReference type="CDD" id="cd04322">
    <property type="entry name" value="LysRS_N"/>
    <property type="match status" value="1"/>
</dbReference>
<dbReference type="Gene3D" id="3.30.930.10">
    <property type="entry name" value="Bira Bifunctional Protein, Domain 2"/>
    <property type="match status" value="1"/>
</dbReference>
<dbReference type="Gene3D" id="2.40.50.140">
    <property type="entry name" value="Nucleic acid-binding proteins"/>
    <property type="match status" value="1"/>
</dbReference>
<dbReference type="HAMAP" id="MF_00252">
    <property type="entry name" value="Lys_tRNA_synth_class2"/>
    <property type="match status" value="1"/>
</dbReference>
<dbReference type="InterPro" id="IPR004364">
    <property type="entry name" value="Aa-tRNA-synt_II"/>
</dbReference>
<dbReference type="InterPro" id="IPR006195">
    <property type="entry name" value="aa-tRNA-synth_II"/>
</dbReference>
<dbReference type="InterPro" id="IPR045864">
    <property type="entry name" value="aa-tRNA-synth_II/BPL/LPL"/>
</dbReference>
<dbReference type="InterPro" id="IPR002313">
    <property type="entry name" value="Lys-tRNA-ligase_II"/>
</dbReference>
<dbReference type="InterPro" id="IPR044136">
    <property type="entry name" value="Lys-tRNA-ligase_II_N"/>
</dbReference>
<dbReference type="InterPro" id="IPR018149">
    <property type="entry name" value="Lys-tRNA-synth_II_C"/>
</dbReference>
<dbReference type="InterPro" id="IPR012340">
    <property type="entry name" value="NA-bd_OB-fold"/>
</dbReference>
<dbReference type="InterPro" id="IPR004365">
    <property type="entry name" value="NA-bd_OB_tRNA"/>
</dbReference>
<dbReference type="NCBIfam" id="TIGR00499">
    <property type="entry name" value="lysS_bact"/>
    <property type="match status" value="1"/>
</dbReference>
<dbReference type="NCBIfam" id="NF001756">
    <property type="entry name" value="PRK00484.1"/>
    <property type="match status" value="1"/>
</dbReference>
<dbReference type="PANTHER" id="PTHR42918:SF15">
    <property type="entry name" value="LYSINE--TRNA LIGASE, CHLOROPLASTIC_MITOCHONDRIAL"/>
    <property type="match status" value="1"/>
</dbReference>
<dbReference type="PANTHER" id="PTHR42918">
    <property type="entry name" value="LYSYL-TRNA SYNTHETASE"/>
    <property type="match status" value="1"/>
</dbReference>
<dbReference type="Pfam" id="PF00152">
    <property type="entry name" value="tRNA-synt_2"/>
    <property type="match status" value="1"/>
</dbReference>
<dbReference type="Pfam" id="PF01336">
    <property type="entry name" value="tRNA_anti-codon"/>
    <property type="match status" value="1"/>
</dbReference>
<dbReference type="PRINTS" id="PR00982">
    <property type="entry name" value="TRNASYNTHLYS"/>
</dbReference>
<dbReference type="SUPFAM" id="SSF55681">
    <property type="entry name" value="Class II aaRS and biotin synthetases"/>
    <property type="match status" value="1"/>
</dbReference>
<dbReference type="SUPFAM" id="SSF50249">
    <property type="entry name" value="Nucleic acid-binding proteins"/>
    <property type="match status" value="1"/>
</dbReference>
<dbReference type="PROSITE" id="PS50862">
    <property type="entry name" value="AA_TRNA_LIGASE_II"/>
    <property type="match status" value="1"/>
</dbReference>
<keyword id="KW-0030">Aminoacyl-tRNA synthetase</keyword>
<keyword id="KW-0067">ATP-binding</keyword>
<keyword id="KW-0963">Cytoplasm</keyword>
<keyword id="KW-0436">Ligase</keyword>
<keyword id="KW-0460">Magnesium</keyword>
<keyword id="KW-0479">Metal-binding</keyword>
<keyword id="KW-0547">Nucleotide-binding</keyword>
<keyword id="KW-0648">Protein biosynthesis</keyword>
<organism>
    <name type="scientific">Rhizobium etli (strain CIAT 652)</name>
    <dbReference type="NCBI Taxonomy" id="491916"/>
    <lineage>
        <taxon>Bacteria</taxon>
        <taxon>Pseudomonadati</taxon>
        <taxon>Pseudomonadota</taxon>
        <taxon>Alphaproteobacteria</taxon>
        <taxon>Hyphomicrobiales</taxon>
        <taxon>Rhizobiaceae</taxon>
        <taxon>Rhizobium/Agrobacterium group</taxon>
        <taxon>Rhizobium</taxon>
    </lineage>
</organism>
<accession>B3Q0S4</accession>
<reference key="1">
    <citation type="journal article" date="2010" name="Appl. Environ. Microbiol.">
        <title>Conserved symbiotic plasmid DNA sequences in the multireplicon pangenomic structure of Rhizobium etli.</title>
        <authorList>
            <person name="Gonzalez V."/>
            <person name="Acosta J.L."/>
            <person name="Santamaria R.I."/>
            <person name="Bustos P."/>
            <person name="Fernandez J.L."/>
            <person name="Hernandez Gonzalez I.L."/>
            <person name="Diaz R."/>
            <person name="Flores M."/>
            <person name="Palacios R."/>
            <person name="Mora J."/>
            <person name="Davila G."/>
        </authorList>
    </citation>
    <scope>NUCLEOTIDE SEQUENCE [LARGE SCALE GENOMIC DNA]</scope>
    <source>
        <strain>CIAT 652</strain>
    </source>
</reference>
<comment type="catalytic activity">
    <reaction evidence="1">
        <text>tRNA(Lys) + L-lysine + ATP = L-lysyl-tRNA(Lys) + AMP + diphosphate</text>
        <dbReference type="Rhea" id="RHEA:20792"/>
        <dbReference type="Rhea" id="RHEA-COMP:9696"/>
        <dbReference type="Rhea" id="RHEA-COMP:9697"/>
        <dbReference type="ChEBI" id="CHEBI:30616"/>
        <dbReference type="ChEBI" id="CHEBI:32551"/>
        <dbReference type="ChEBI" id="CHEBI:33019"/>
        <dbReference type="ChEBI" id="CHEBI:78442"/>
        <dbReference type="ChEBI" id="CHEBI:78529"/>
        <dbReference type="ChEBI" id="CHEBI:456215"/>
        <dbReference type="EC" id="6.1.1.6"/>
    </reaction>
</comment>
<comment type="cofactor">
    <cofactor evidence="1">
        <name>Mg(2+)</name>
        <dbReference type="ChEBI" id="CHEBI:18420"/>
    </cofactor>
    <text evidence="1">Binds 3 Mg(2+) ions per subunit.</text>
</comment>
<comment type="subunit">
    <text evidence="1">Homodimer.</text>
</comment>
<comment type="subcellular location">
    <subcellularLocation>
        <location evidence="1">Cytoplasm</location>
    </subcellularLocation>
</comment>
<comment type="similarity">
    <text evidence="1">Belongs to the class-II aminoacyl-tRNA synthetase family.</text>
</comment>
<feature type="chain" id="PRO_1000101139" description="Lysine--tRNA ligase">
    <location>
        <begin position="1"/>
        <end position="498"/>
    </location>
</feature>
<feature type="binding site" evidence="1">
    <location>
        <position position="407"/>
    </location>
    <ligand>
        <name>Mg(2+)</name>
        <dbReference type="ChEBI" id="CHEBI:18420"/>
        <label>1</label>
    </ligand>
</feature>
<feature type="binding site" evidence="1">
    <location>
        <position position="414"/>
    </location>
    <ligand>
        <name>Mg(2+)</name>
        <dbReference type="ChEBI" id="CHEBI:18420"/>
        <label>1</label>
    </ligand>
</feature>
<feature type="binding site" evidence="1">
    <location>
        <position position="414"/>
    </location>
    <ligand>
        <name>Mg(2+)</name>
        <dbReference type="ChEBI" id="CHEBI:18420"/>
        <label>2</label>
    </ligand>
</feature>
<protein>
    <recommendedName>
        <fullName evidence="1">Lysine--tRNA ligase</fullName>
        <ecNumber evidence="1">6.1.1.6</ecNumber>
    </recommendedName>
    <alternativeName>
        <fullName evidence="1">Lysyl-tRNA synthetase</fullName>
        <shortName evidence="1">LysRS</shortName>
    </alternativeName>
</protein>
<name>SYK_RHIE6</name>
<sequence length="498" mass="56702">MADNKTENALSSDATEVRAQKLKLLREQIGDVYPAHFHRTMTNAELGAKYESLEPDVETQDVVTVAGRVYSSRNSGMFMDIHDASGKIQIFSHKDVTGEEARALLPMIDIGDIIGVTGVVRRTKRGELTINAQKIEMLTKSLLPMPEKWHGLSDIELRYRKRHLDIMTNEDSKLRFQQRSKIVSGIRRFMENDGFMEVETPMLQSIYGGATAEPFKTHHNTLKLDMYLRIAPELFLKRTLVSGLTDKVFEINRNFRNEGVSTRHNPEFTMMECYWAYADYEDMMDLVERLFEALALSIHGTTEFDFGDKRLSFKGPFKRVPMPDAVKEATGIDFLTIKTDEEARAAAKAAGFAVEKDWTWGECLAFIFEEKVEATLIQPSHVTHFPKDISPFAKEVPGEPRLVERFETYCNAWELGNAFSELNDPEEQRRRMVEQLEQAHARGEKEKQLDEEFLDAIDQGMPPAGGLGIGVDRLIMLLTNAPSIRDVILFPARRNKAD</sequence>
<proteinExistence type="inferred from homology"/>
<evidence type="ECO:0000255" key="1">
    <source>
        <dbReference type="HAMAP-Rule" id="MF_00252"/>
    </source>
</evidence>